<protein>
    <recommendedName>
        <fullName evidence="1">Nucleoid occlusion factor SlmA</fullName>
    </recommendedName>
</protein>
<dbReference type="EMBL" id="CP000950">
    <property type="protein sequence ID" value="ACA70417.1"/>
    <property type="molecule type" value="Genomic_DNA"/>
</dbReference>
<dbReference type="RefSeq" id="WP_002208995.1">
    <property type="nucleotide sequence ID" value="NZ_CP009792.1"/>
</dbReference>
<dbReference type="SMR" id="B1JQX6"/>
<dbReference type="GeneID" id="96663527"/>
<dbReference type="KEGG" id="ypy:YPK_4158"/>
<dbReference type="PATRIC" id="fig|502800.11.peg.509"/>
<dbReference type="GO" id="GO:0043590">
    <property type="term" value="C:bacterial nucleoid"/>
    <property type="evidence" value="ECO:0007669"/>
    <property type="project" value="UniProtKB-UniRule"/>
</dbReference>
<dbReference type="GO" id="GO:0005737">
    <property type="term" value="C:cytoplasm"/>
    <property type="evidence" value="ECO:0007669"/>
    <property type="project" value="UniProtKB-UniRule"/>
</dbReference>
<dbReference type="GO" id="GO:0003700">
    <property type="term" value="F:DNA-binding transcription factor activity"/>
    <property type="evidence" value="ECO:0007669"/>
    <property type="project" value="TreeGrafter"/>
</dbReference>
<dbReference type="GO" id="GO:0000976">
    <property type="term" value="F:transcription cis-regulatory region binding"/>
    <property type="evidence" value="ECO:0007669"/>
    <property type="project" value="TreeGrafter"/>
</dbReference>
<dbReference type="GO" id="GO:0051301">
    <property type="term" value="P:cell division"/>
    <property type="evidence" value="ECO:0007669"/>
    <property type="project" value="UniProtKB-KW"/>
</dbReference>
<dbReference type="GO" id="GO:0010974">
    <property type="term" value="P:negative regulation of division septum assembly"/>
    <property type="evidence" value="ECO:0007669"/>
    <property type="project" value="InterPro"/>
</dbReference>
<dbReference type="FunFam" id="1.10.357.10:FF:000002">
    <property type="entry name" value="Nucleoid occlusion factor SlmA"/>
    <property type="match status" value="1"/>
</dbReference>
<dbReference type="Gene3D" id="1.10.357.10">
    <property type="entry name" value="Tetracycline Repressor, domain 2"/>
    <property type="match status" value="1"/>
</dbReference>
<dbReference type="HAMAP" id="MF_01839">
    <property type="entry name" value="NO_factor_SlmA"/>
    <property type="match status" value="1"/>
</dbReference>
<dbReference type="InterPro" id="IPR023772">
    <property type="entry name" value="DNA-bd_HTH_TetR-type_CS"/>
</dbReference>
<dbReference type="InterPro" id="IPR009057">
    <property type="entry name" value="Homeodomain-like_sf"/>
</dbReference>
<dbReference type="InterPro" id="IPR050109">
    <property type="entry name" value="HTH-type_TetR-like_transc_reg"/>
</dbReference>
<dbReference type="InterPro" id="IPR001647">
    <property type="entry name" value="HTH_TetR"/>
</dbReference>
<dbReference type="InterPro" id="IPR023769">
    <property type="entry name" value="NO_SlmA"/>
</dbReference>
<dbReference type="InterPro" id="IPR054580">
    <property type="entry name" value="SlmA-like_C"/>
</dbReference>
<dbReference type="InterPro" id="IPR036271">
    <property type="entry name" value="Tet_transcr_reg_TetR-rel_C_sf"/>
</dbReference>
<dbReference type="NCBIfam" id="NF007015">
    <property type="entry name" value="PRK09480.1"/>
    <property type="match status" value="1"/>
</dbReference>
<dbReference type="PANTHER" id="PTHR30055">
    <property type="entry name" value="HTH-TYPE TRANSCRIPTIONAL REGULATOR RUTR"/>
    <property type="match status" value="1"/>
</dbReference>
<dbReference type="PANTHER" id="PTHR30055:SF183">
    <property type="entry name" value="NUCLEOID OCCLUSION FACTOR SLMA"/>
    <property type="match status" value="1"/>
</dbReference>
<dbReference type="Pfam" id="PF22276">
    <property type="entry name" value="SlmA-like_C"/>
    <property type="match status" value="1"/>
</dbReference>
<dbReference type="Pfam" id="PF00440">
    <property type="entry name" value="TetR_N"/>
    <property type="match status" value="1"/>
</dbReference>
<dbReference type="SUPFAM" id="SSF46689">
    <property type="entry name" value="Homeodomain-like"/>
    <property type="match status" value="1"/>
</dbReference>
<dbReference type="SUPFAM" id="SSF48498">
    <property type="entry name" value="Tetracyclin repressor-like, C-terminal domain"/>
    <property type="match status" value="1"/>
</dbReference>
<dbReference type="PROSITE" id="PS01081">
    <property type="entry name" value="HTH_TETR_1"/>
    <property type="match status" value="1"/>
</dbReference>
<dbReference type="PROSITE" id="PS50977">
    <property type="entry name" value="HTH_TETR_2"/>
    <property type="match status" value="1"/>
</dbReference>
<proteinExistence type="inferred from homology"/>
<gene>
    <name evidence="1" type="primary">slmA</name>
    <name type="ordered locus">YPK_4158</name>
</gene>
<sequence length="198" mass="23107">MAEKENTKRNRREEILQALAQMLESSDGSQRITTAKLAANVGVSEAALYRHFPSKTRMFDSLIEFIEDSLMSRINLILQDEKETFNRLRLILLLVLGFAERNPGLTRIMTGHALMFEQDRLQGRINQLFERIEMQLRQVLREKKLRDGQGFIHDEALLATQLLAFCEGMLSRFVRSEFRYCPTQEFDSRWPLIVAQLQ</sequence>
<reference key="1">
    <citation type="submission" date="2008-02" db="EMBL/GenBank/DDBJ databases">
        <title>Complete sequence of Yersinia pseudotuberculosis YPIII.</title>
        <authorList>
            <consortium name="US DOE Joint Genome Institute"/>
            <person name="Copeland A."/>
            <person name="Lucas S."/>
            <person name="Lapidus A."/>
            <person name="Glavina del Rio T."/>
            <person name="Dalin E."/>
            <person name="Tice H."/>
            <person name="Bruce D."/>
            <person name="Goodwin L."/>
            <person name="Pitluck S."/>
            <person name="Munk A.C."/>
            <person name="Brettin T."/>
            <person name="Detter J.C."/>
            <person name="Han C."/>
            <person name="Tapia R."/>
            <person name="Schmutz J."/>
            <person name="Larimer F."/>
            <person name="Land M."/>
            <person name="Hauser L."/>
            <person name="Challacombe J.F."/>
            <person name="Green L."/>
            <person name="Lindler L.E."/>
            <person name="Nikolich M.P."/>
            <person name="Richardson P."/>
        </authorList>
    </citation>
    <scope>NUCLEOTIDE SEQUENCE [LARGE SCALE GENOMIC DNA]</scope>
    <source>
        <strain>YPIII</strain>
    </source>
</reference>
<comment type="function">
    <text evidence="1">Required for nucleoid occlusion (NO) phenomenon, which prevents Z-ring formation and cell division over the nucleoid. Acts as a DNA-associated cell division inhibitor that binds simultaneously chromosomal DNA and FtsZ, and disrupts the assembly of FtsZ polymers. SlmA-DNA-binding sequences (SBS) are dispersed on non-Ter regions of the chromosome, preventing FtsZ polymerization at these regions.</text>
</comment>
<comment type="subunit">
    <text evidence="1">Homodimer. Interacts with FtsZ.</text>
</comment>
<comment type="subcellular location">
    <subcellularLocation>
        <location evidence="1">Cytoplasm</location>
        <location evidence="1">Nucleoid</location>
    </subcellularLocation>
</comment>
<comment type="similarity">
    <text evidence="1">Belongs to the nucleoid occlusion factor SlmA family.</text>
</comment>
<keyword id="KW-0131">Cell cycle</keyword>
<keyword id="KW-0132">Cell division</keyword>
<keyword id="KW-0175">Coiled coil</keyword>
<keyword id="KW-0963">Cytoplasm</keyword>
<keyword id="KW-0238">DNA-binding</keyword>
<accession>B1JQX6</accession>
<feature type="chain" id="PRO_1000188410" description="Nucleoid occlusion factor SlmA">
    <location>
        <begin position="1"/>
        <end position="198"/>
    </location>
</feature>
<feature type="domain" description="HTH tetR-type" evidence="1">
    <location>
        <begin position="9"/>
        <end position="70"/>
    </location>
</feature>
<feature type="DNA-binding region" description="H-T-H motif" evidence="1">
    <location>
        <begin position="33"/>
        <end position="52"/>
    </location>
</feature>
<feature type="coiled-coil region" evidence="1">
    <location>
        <begin position="119"/>
        <end position="144"/>
    </location>
</feature>
<name>SLMA_YERPY</name>
<evidence type="ECO:0000255" key="1">
    <source>
        <dbReference type="HAMAP-Rule" id="MF_01839"/>
    </source>
</evidence>
<organism>
    <name type="scientific">Yersinia pseudotuberculosis serotype O:3 (strain YPIII)</name>
    <dbReference type="NCBI Taxonomy" id="502800"/>
    <lineage>
        <taxon>Bacteria</taxon>
        <taxon>Pseudomonadati</taxon>
        <taxon>Pseudomonadota</taxon>
        <taxon>Gammaproteobacteria</taxon>
        <taxon>Enterobacterales</taxon>
        <taxon>Yersiniaceae</taxon>
        <taxon>Yersinia</taxon>
    </lineage>
</organism>